<accession>Q83FI1</accession>
<name>CLPB_TROWT</name>
<evidence type="ECO:0000250" key="1"/>
<evidence type="ECO:0000305" key="2"/>
<protein>
    <recommendedName>
        <fullName>Chaperone protein ClpB</fullName>
    </recommendedName>
</protein>
<keyword id="KW-0067">ATP-binding</keyword>
<keyword id="KW-0143">Chaperone</keyword>
<keyword id="KW-0175">Coiled coil</keyword>
<keyword id="KW-0963">Cytoplasm</keyword>
<keyword id="KW-0547">Nucleotide-binding</keyword>
<keyword id="KW-1185">Reference proteome</keyword>
<keyword id="KW-0677">Repeat</keyword>
<keyword id="KW-0346">Stress response</keyword>
<gene>
    <name type="primary">clpB</name>
    <name type="ordered locus">TWT_746</name>
</gene>
<comment type="function">
    <text evidence="1">Part of a stress-induced multi-chaperone system, it is involved in the recovery of the cell from heat-induced damage, in cooperation with DnaK, DnaJ and GrpE. Acts before DnaK, in the processing of protein aggregates. Protein binding stimulates the ATPase activity; ATP hydrolysis unfolds the denatured protein aggregates, which probably helps expose new hydrophobic binding sites on the surface of ClpB-bound aggregates, contributing to the solubilization and refolding of denatured protein aggregates by DnaK (By similarity).</text>
</comment>
<comment type="subunit">
    <text evidence="1">Homohexamer. The oligomerization is ATP-dependent (By similarity).</text>
</comment>
<comment type="subcellular location">
    <subcellularLocation>
        <location evidence="2">Cytoplasm</location>
    </subcellularLocation>
</comment>
<comment type="domain">
    <text evidence="1">The N-terminal domain probably functions as a substrate-discriminating domain, recruiting aggregated proteins to the ClpB hexamer and/or stabilizing bound proteins. The NBD2 domain is responsible for oligomerization, whereas the NBD1 domain stabilizes the hexamer probably in an ATP-dependent manner. The movement of the coiled-coil domain is essential for ClpB ability to rescue proteins from an aggregated state, probably by pulling apart large aggregated proteins, which are bound between the coiled-coils motifs of adjacent ClpB subunits in the functional hexamer (By similarity).</text>
</comment>
<comment type="similarity">
    <text evidence="2">Belongs to the ClpA/ClpB family.</text>
</comment>
<sequence>MCGGSFMSESQSELDKYGTNLTKTAATNKLDPVIGRDAEIRRVCQILSRRTKNNPVLIGSAGVGKTAIVEGLAQRIVAGDVPESLRNKEIVSLDLSALLAGASYRGEFEKRVKNLLEEIQKSKVIIFIDEVHTLMSAGAAEGAIAAGNMLKPLLARGELRLIGATTLDEYREHLEKDPALERRFQQVFVGEPNLEDCIAIMRGLKERYEAHHKVSISDTALVTAVELSSRYITGRQLPDKAIDLLDEAASSLRMEIDSSPVELDQLRREVDRLRLEELALKSENDPTSEQRLRSITNQLSGKQEMLNTLQASWNSERARLNQIGALKEQIDIAKQSADIAQREGRLEDASRLLYATIPQLQKNLAEKLEEQDSAPLVSDQVMPEDIASVVEGWTGIPVKKLMQKDAKQLLHLEEDLSKSVIAQKVAIGVIADAVRRSRAGLSDPNRPSGTFLFLGPTGVGKTQLVKALASLLYDGEIVRIDMSEYSEKFSISRLIGAPPGYIGHESAGQLTESVRRRPYSVVLFDEAEKAHPEVFDILLQVLDEGRLTDSHGRTVDFRNTIIVLTSNIGSRYLSDISLEATTAHEYVNDEVRRTFRPEFLNRLDEIVIFEPLSQSDICQIVDLNIESLNKRIKDRRIVVTVSEDLRRWLSKSGYDVIYGARPLRRLIQREIEDRLAKLIIEGLIHDGQTASFDLSGGAVNAQVCS</sequence>
<reference key="1">
    <citation type="journal article" date="2003" name="Genome Res.">
        <title>Tropheryma whipplei twist: a human pathogenic Actinobacteria with a reduced genome.</title>
        <authorList>
            <person name="Raoult D."/>
            <person name="Ogata H."/>
            <person name="Audic S."/>
            <person name="Robert C."/>
            <person name="Suhre K."/>
            <person name="Drancourt M."/>
            <person name="Claverie J.-M."/>
        </authorList>
    </citation>
    <scope>NUCLEOTIDE SEQUENCE [LARGE SCALE GENOMIC DNA]</scope>
    <source>
        <strain>Twist</strain>
    </source>
</reference>
<organism>
    <name type="scientific">Tropheryma whipplei (strain Twist)</name>
    <name type="common">Whipple's bacillus</name>
    <dbReference type="NCBI Taxonomy" id="203267"/>
    <lineage>
        <taxon>Bacteria</taxon>
        <taxon>Bacillati</taxon>
        <taxon>Actinomycetota</taxon>
        <taxon>Actinomycetes</taxon>
        <taxon>Micrococcales</taxon>
        <taxon>Tropherymataceae</taxon>
        <taxon>Tropheryma</taxon>
    </lineage>
</organism>
<feature type="chain" id="PRO_0000191199" description="Chaperone protein ClpB">
    <location>
        <begin position="1"/>
        <end position="705"/>
    </location>
</feature>
<feature type="region of interest" description="N-terminal" evidence="1">
    <location>
        <position position="1"/>
    </location>
</feature>
<feature type="region of interest" description="NBD1" evidence="1">
    <location>
        <begin position="14"/>
        <end position="191"/>
    </location>
</feature>
<feature type="region of interest" description="Linker" evidence="1">
    <location>
        <begin position="192"/>
        <end position="395"/>
    </location>
</feature>
<feature type="region of interest" description="NBD2" evidence="1">
    <location>
        <begin position="405"/>
        <end position="611"/>
    </location>
</feature>
<feature type="region of interest" description="C-terminal" evidence="1">
    <location>
        <begin position="612"/>
        <end position="705"/>
    </location>
</feature>
<feature type="coiled-coil region" evidence="1">
    <location>
        <begin position="242"/>
        <end position="373"/>
    </location>
</feature>
<feature type="binding site" evidence="1">
    <location>
        <begin position="59"/>
        <end position="66"/>
    </location>
    <ligand>
        <name>ATP</name>
        <dbReference type="ChEBI" id="CHEBI:30616"/>
        <label>1</label>
    </ligand>
</feature>
<feature type="binding site" evidence="1">
    <location>
        <begin position="455"/>
        <end position="462"/>
    </location>
    <ligand>
        <name>ATP</name>
        <dbReference type="ChEBI" id="CHEBI:30616"/>
        <label>2</label>
    </ligand>
</feature>
<dbReference type="EMBL" id="AE014184">
    <property type="protein sequence ID" value="AAO44843.1"/>
    <property type="molecule type" value="Genomic_DNA"/>
</dbReference>
<dbReference type="SMR" id="Q83FI1"/>
<dbReference type="STRING" id="203267.TWT_746"/>
<dbReference type="KEGG" id="twh:TWT_746"/>
<dbReference type="eggNOG" id="COG0542">
    <property type="taxonomic scope" value="Bacteria"/>
</dbReference>
<dbReference type="HOGENOM" id="CLU_005070_4_0_11"/>
<dbReference type="Proteomes" id="UP000002200">
    <property type="component" value="Chromosome"/>
</dbReference>
<dbReference type="GO" id="GO:0005737">
    <property type="term" value="C:cytoplasm"/>
    <property type="evidence" value="ECO:0007669"/>
    <property type="project" value="UniProtKB-SubCell"/>
</dbReference>
<dbReference type="GO" id="GO:0005524">
    <property type="term" value="F:ATP binding"/>
    <property type="evidence" value="ECO:0007669"/>
    <property type="project" value="UniProtKB-KW"/>
</dbReference>
<dbReference type="GO" id="GO:0016887">
    <property type="term" value="F:ATP hydrolysis activity"/>
    <property type="evidence" value="ECO:0007669"/>
    <property type="project" value="InterPro"/>
</dbReference>
<dbReference type="GO" id="GO:0034605">
    <property type="term" value="P:cellular response to heat"/>
    <property type="evidence" value="ECO:0007669"/>
    <property type="project" value="TreeGrafter"/>
</dbReference>
<dbReference type="CDD" id="cd00009">
    <property type="entry name" value="AAA"/>
    <property type="match status" value="1"/>
</dbReference>
<dbReference type="CDD" id="cd19499">
    <property type="entry name" value="RecA-like_ClpB_Hsp104-like"/>
    <property type="match status" value="1"/>
</dbReference>
<dbReference type="FunFam" id="3.40.50.300:FF:000120">
    <property type="entry name" value="ATP-dependent chaperone ClpB"/>
    <property type="match status" value="1"/>
</dbReference>
<dbReference type="FunFam" id="3.40.50.300:FF:000025">
    <property type="entry name" value="ATP-dependent Clp protease subunit"/>
    <property type="match status" value="1"/>
</dbReference>
<dbReference type="FunFam" id="3.40.50.300:FF:000010">
    <property type="entry name" value="Chaperone clpB 1, putative"/>
    <property type="match status" value="1"/>
</dbReference>
<dbReference type="Gene3D" id="1.10.8.60">
    <property type="match status" value="1"/>
</dbReference>
<dbReference type="Gene3D" id="3.40.50.300">
    <property type="entry name" value="P-loop containing nucleotide triphosphate hydrolases"/>
    <property type="match status" value="3"/>
</dbReference>
<dbReference type="InterPro" id="IPR003593">
    <property type="entry name" value="AAA+_ATPase"/>
</dbReference>
<dbReference type="InterPro" id="IPR003959">
    <property type="entry name" value="ATPase_AAA_core"/>
</dbReference>
<dbReference type="InterPro" id="IPR019489">
    <property type="entry name" value="Clp_ATPase_C"/>
</dbReference>
<dbReference type="InterPro" id="IPR001270">
    <property type="entry name" value="ClpA/B"/>
</dbReference>
<dbReference type="InterPro" id="IPR018368">
    <property type="entry name" value="ClpA/B_CS1"/>
</dbReference>
<dbReference type="InterPro" id="IPR028299">
    <property type="entry name" value="ClpA/B_CS2"/>
</dbReference>
<dbReference type="InterPro" id="IPR041546">
    <property type="entry name" value="ClpA/ClpB_AAA_lid"/>
</dbReference>
<dbReference type="InterPro" id="IPR050130">
    <property type="entry name" value="ClpA_ClpB"/>
</dbReference>
<dbReference type="InterPro" id="IPR027417">
    <property type="entry name" value="P-loop_NTPase"/>
</dbReference>
<dbReference type="PANTHER" id="PTHR11638">
    <property type="entry name" value="ATP-DEPENDENT CLP PROTEASE"/>
    <property type="match status" value="1"/>
</dbReference>
<dbReference type="PANTHER" id="PTHR11638:SF18">
    <property type="entry name" value="HEAT SHOCK PROTEIN 104"/>
    <property type="match status" value="1"/>
</dbReference>
<dbReference type="Pfam" id="PF00004">
    <property type="entry name" value="AAA"/>
    <property type="match status" value="1"/>
</dbReference>
<dbReference type="Pfam" id="PF07724">
    <property type="entry name" value="AAA_2"/>
    <property type="match status" value="1"/>
</dbReference>
<dbReference type="Pfam" id="PF17871">
    <property type="entry name" value="AAA_lid_9"/>
    <property type="match status" value="1"/>
</dbReference>
<dbReference type="Pfam" id="PF10431">
    <property type="entry name" value="ClpB_D2-small"/>
    <property type="match status" value="1"/>
</dbReference>
<dbReference type="PRINTS" id="PR00300">
    <property type="entry name" value="CLPPROTEASEA"/>
</dbReference>
<dbReference type="SMART" id="SM00382">
    <property type="entry name" value="AAA"/>
    <property type="match status" value="2"/>
</dbReference>
<dbReference type="SMART" id="SM01086">
    <property type="entry name" value="ClpB_D2-small"/>
    <property type="match status" value="1"/>
</dbReference>
<dbReference type="SUPFAM" id="SSF52540">
    <property type="entry name" value="P-loop containing nucleoside triphosphate hydrolases"/>
    <property type="match status" value="2"/>
</dbReference>
<dbReference type="PROSITE" id="PS00870">
    <property type="entry name" value="CLPAB_1"/>
    <property type="match status" value="1"/>
</dbReference>
<dbReference type="PROSITE" id="PS00871">
    <property type="entry name" value="CLPAB_2"/>
    <property type="match status" value="1"/>
</dbReference>
<proteinExistence type="inferred from homology"/>